<evidence type="ECO:0000255" key="1">
    <source>
        <dbReference type="HAMAP-Rule" id="MF_00208"/>
    </source>
</evidence>
<gene>
    <name evidence="1" type="primary">murE</name>
    <name type="ordered locus">BAPKO_0204</name>
    <name type="ordered locus">BafPKo_0197</name>
</gene>
<sequence length="505" mass="56819">MNKKLNDVLLKLDQDLIKYVKGSLDLEISGVTYSSKLVLPGFVFFALPGIRFDGHDFIEMAIQNGSNVIVHSRDMDFYSPNVTYIKVDDFSIRKFMSNFSNVFYDEPSKKLKVIGVTGTDGKSSVCYYIYLLLKKKGVKVGFISTVFFDDGSGSLIKNPYRQSTPESTEIHAFLSNMVKNGVQYAILESTSHGLDLKTARLIDVNYFAAVFTNIGHEHLEFHGTIQNYLNVKLGLFRSVSDDAGFGVINLDDFYSSEFKNAVKKSFTYSLKSSQADFFVSFIDEKIDSTRFEFYYKGVKYFANVNLLGSFNVENVMAALILVSQILNSDIQDIVDKLVCIKSLDGRMDSINLGQNFSVIIDYAHTPGAFSKLFPIFKRFATNRLISVFGSAGERDVAKRFLQGQISDIYSDLILLCDEDPRGENSMCIIKDIAKGIVNKVVNQDLFFIPDRKQAIEKAISLARAGDLVVVLGKGHESSIIYKNREVFWNEQEVVKNAILSLEKEK</sequence>
<protein>
    <recommendedName>
        <fullName evidence="1">UDP-N-acetylmuramyl-tripeptide synthetase</fullName>
        <ecNumber evidence="1">6.3.2.-</ecNumber>
    </recommendedName>
    <alternativeName>
        <fullName evidence="1">UDP-MurNAc-tripeptide synthetase</fullName>
    </alternativeName>
</protein>
<dbReference type="EC" id="6.3.2.-" evidence="1"/>
<dbReference type="EMBL" id="CP000395">
    <property type="protein sequence ID" value="ABH01466.1"/>
    <property type="molecule type" value="Genomic_DNA"/>
</dbReference>
<dbReference type="EMBL" id="CP002933">
    <property type="protein sequence ID" value="AEL69430.1"/>
    <property type="molecule type" value="Genomic_DNA"/>
</dbReference>
<dbReference type="RefSeq" id="WP_011600887.1">
    <property type="nucleotide sequence ID" value="NC_008277.1"/>
</dbReference>
<dbReference type="SMR" id="Q0SNW2"/>
<dbReference type="STRING" id="29518.BLA32_03310"/>
<dbReference type="KEGG" id="baf:BAPKO_0204"/>
<dbReference type="KEGG" id="bafz:BafPKo_0197"/>
<dbReference type="PATRIC" id="fig|390236.22.peg.196"/>
<dbReference type="eggNOG" id="COG0769">
    <property type="taxonomic scope" value="Bacteria"/>
</dbReference>
<dbReference type="HOGENOM" id="CLU_022291_4_1_12"/>
<dbReference type="OrthoDB" id="9800958at2"/>
<dbReference type="UniPathway" id="UPA00219"/>
<dbReference type="Proteomes" id="UP000005216">
    <property type="component" value="Chromosome"/>
</dbReference>
<dbReference type="GO" id="GO:0005737">
    <property type="term" value="C:cytoplasm"/>
    <property type="evidence" value="ECO:0007669"/>
    <property type="project" value="UniProtKB-SubCell"/>
</dbReference>
<dbReference type="GO" id="GO:0016881">
    <property type="term" value="F:acid-amino acid ligase activity"/>
    <property type="evidence" value="ECO:0007669"/>
    <property type="project" value="UniProtKB-UniRule"/>
</dbReference>
<dbReference type="GO" id="GO:0005524">
    <property type="term" value="F:ATP binding"/>
    <property type="evidence" value="ECO:0007669"/>
    <property type="project" value="UniProtKB-UniRule"/>
</dbReference>
<dbReference type="GO" id="GO:0000287">
    <property type="term" value="F:magnesium ion binding"/>
    <property type="evidence" value="ECO:0007669"/>
    <property type="project" value="UniProtKB-UniRule"/>
</dbReference>
<dbReference type="GO" id="GO:0051301">
    <property type="term" value="P:cell division"/>
    <property type="evidence" value="ECO:0007669"/>
    <property type="project" value="UniProtKB-KW"/>
</dbReference>
<dbReference type="GO" id="GO:0071555">
    <property type="term" value="P:cell wall organization"/>
    <property type="evidence" value="ECO:0007669"/>
    <property type="project" value="UniProtKB-KW"/>
</dbReference>
<dbReference type="GO" id="GO:0009252">
    <property type="term" value="P:peptidoglycan biosynthetic process"/>
    <property type="evidence" value="ECO:0007669"/>
    <property type="project" value="UniProtKB-UniRule"/>
</dbReference>
<dbReference type="GO" id="GO:0008360">
    <property type="term" value="P:regulation of cell shape"/>
    <property type="evidence" value="ECO:0007669"/>
    <property type="project" value="UniProtKB-KW"/>
</dbReference>
<dbReference type="Gene3D" id="3.90.190.20">
    <property type="entry name" value="Mur ligase, C-terminal domain"/>
    <property type="match status" value="1"/>
</dbReference>
<dbReference type="Gene3D" id="3.40.1190.10">
    <property type="entry name" value="Mur-like, catalytic domain"/>
    <property type="match status" value="1"/>
</dbReference>
<dbReference type="Gene3D" id="3.40.1390.10">
    <property type="entry name" value="MurE/MurF, N-terminal domain"/>
    <property type="match status" value="1"/>
</dbReference>
<dbReference type="HAMAP" id="MF_00208">
    <property type="entry name" value="MurE"/>
    <property type="match status" value="1"/>
</dbReference>
<dbReference type="InterPro" id="IPR036565">
    <property type="entry name" value="Mur-like_cat_sf"/>
</dbReference>
<dbReference type="InterPro" id="IPR004101">
    <property type="entry name" value="Mur_ligase_C"/>
</dbReference>
<dbReference type="InterPro" id="IPR036615">
    <property type="entry name" value="Mur_ligase_C_dom_sf"/>
</dbReference>
<dbReference type="InterPro" id="IPR013221">
    <property type="entry name" value="Mur_ligase_cen"/>
</dbReference>
<dbReference type="InterPro" id="IPR000713">
    <property type="entry name" value="Mur_ligase_N"/>
</dbReference>
<dbReference type="InterPro" id="IPR035911">
    <property type="entry name" value="MurE/MurF_N"/>
</dbReference>
<dbReference type="InterPro" id="IPR005761">
    <property type="entry name" value="UDP-N-AcMur-Glu-dNH2Pim_ligase"/>
</dbReference>
<dbReference type="NCBIfam" id="TIGR01085">
    <property type="entry name" value="murE"/>
    <property type="match status" value="1"/>
</dbReference>
<dbReference type="NCBIfam" id="NF001126">
    <property type="entry name" value="PRK00139.1-4"/>
    <property type="match status" value="1"/>
</dbReference>
<dbReference type="PANTHER" id="PTHR23135">
    <property type="entry name" value="MUR LIGASE FAMILY MEMBER"/>
    <property type="match status" value="1"/>
</dbReference>
<dbReference type="PANTHER" id="PTHR23135:SF4">
    <property type="entry name" value="UDP-N-ACETYLMURAMOYL-L-ALANYL-D-GLUTAMATE--2,6-DIAMINOPIMELATE LIGASE MURE HOMOLOG, CHLOROPLASTIC"/>
    <property type="match status" value="1"/>
</dbReference>
<dbReference type="Pfam" id="PF01225">
    <property type="entry name" value="Mur_ligase"/>
    <property type="match status" value="1"/>
</dbReference>
<dbReference type="Pfam" id="PF02875">
    <property type="entry name" value="Mur_ligase_C"/>
    <property type="match status" value="1"/>
</dbReference>
<dbReference type="Pfam" id="PF08245">
    <property type="entry name" value="Mur_ligase_M"/>
    <property type="match status" value="1"/>
</dbReference>
<dbReference type="SUPFAM" id="SSF53623">
    <property type="entry name" value="MurD-like peptide ligases, catalytic domain"/>
    <property type="match status" value="1"/>
</dbReference>
<dbReference type="SUPFAM" id="SSF53244">
    <property type="entry name" value="MurD-like peptide ligases, peptide-binding domain"/>
    <property type="match status" value="1"/>
</dbReference>
<dbReference type="SUPFAM" id="SSF63418">
    <property type="entry name" value="MurE/MurF N-terminal domain"/>
    <property type="match status" value="1"/>
</dbReference>
<reference key="1">
    <citation type="journal article" date="2006" name="BMC Genomics">
        <title>Comparative genome analysis: selection pressure on the Borrelia vls cassettes is essential for infectivity.</title>
        <authorList>
            <person name="Gloeckner G."/>
            <person name="Schulte-Spechtel U."/>
            <person name="Schilhabel M."/>
            <person name="Felder M."/>
            <person name="Suehnel J."/>
            <person name="Wilske B."/>
            <person name="Platzer M."/>
        </authorList>
    </citation>
    <scope>NUCLEOTIDE SEQUENCE [LARGE SCALE GENOMIC DNA]</scope>
    <source>
        <strain>PKo</strain>
    </source>
</reference>
<reference key="2">
    <citation type="journal article" date="2011" name="J. Bacteriol.">
        <title>Whole-genome sequences of two Borrelia afzelii and two Borrelia garinii Lyme disease agent isolates.</title>
        <authorList>
            <person name="Casjens S.R."/>
            <person name="Mongodin E.F."/>
            <person name="Qiu W.G."/>
            <person name="Dunn J.J."/>
            <person name="Luft B.J."/>
            <person name="Fraser-Liggett C.M."/>
            <person name="Schutzer S.E."/>
        </authorList>
    </citation>
    <scope>NUCLEOTIDE SEQUENCE [LARGE SCALE GENOMIC DNA]</scope>
    <source>
        <strain>PKo</strain>
    </source>
</reference>
<proteinExistence type="inferred from homology"/>
<feature type="chain" id="PRO_1000012341" description="UDP-N-acetylmuramyl-tripeptide synthetase">
    <location>
        <begin position="1"/>
        <end position="505"/>
    </location>
</feature>
<feature type="binding site" evidence="1">
    <location>
        <position position="35"/>
    </location>
    <ligand>
        <name>UDP-N-acetyl-alpha-D-muramoyl-L-alanyl-D-glutamate</name>
        <dbReference type="ChEBI" id="CHEBI:83900"/>
    </ligand>
</feature>
<feature type="binding site" evidence="1">
    <location>
        <begin position="118"/>
        <end position="124"/>
    </location>
    <ligand>
        <name>ATP</name>
        <dbReference type="ChEBI" id="CHEBI:30616"/>
    </ligand>
</feature>
<feature type="binding site" evidence="1">
    <location>
        <begin position="163"/>
        <end position="164"/>
    </location>
    <ligand>
        <name>UDP-N-acetyl-alpha-D-muramoyl-L-alanyl-D-glutamate</name>
        <dbReference type="ChEBI" id="CHEBI:83900"/>
    </ligand>
</feature>
<feature type="binding site" evidence="1">
    <location>
        <position position="190"/>
    </location>
    <ligand>
        <name>UDP-N-acetyl-alpha-D-muramoyl-L-alanyl-D-glutamate</name>
        <dbReference type="ChEBI" id="CHEBI:83900"/>
    </ligand>
</feature>
<feature type="binding site" evidence="1">
    <location>
        <position position="200"/>
    </location>
    <ligand>
        <name>UDP-N-acetyl-alpha-D-muramoyl-L-alanyl-D-glutamate</name>
        <dbReference type="ChEBI" id="CHEBI:83900"/>
    </ligand>
</feature>
<feature type="modified residue" description="N6-carboxylysine" evidence="1">
    <location>
        <position position="232"/>
    </location>
</feature>
<accession>Q0SNW2</accession>
<accession>G0IR44</accession>
<comment type="function">
    <text evidence="1">Catalyzes the addition of an amino acid to the nucleotide precursor UDP-N-acetylmuramoyl-L-alanyl-D-glutamate (UMAG) in the biosynthesis of bacterial cell-wall peptidoglycan.</text>
</comment>
<comment type="pathway">
    <text evidence="1">Cell wall biogenesis; peptidoglycan biosynthesis.</text>
</comment>
<comment type="subcellular location">
    <subcellularLocation>
        <location evidence="1">Cytoplasm</location>
    </subcellularLocation>
</comment>
<comment type="PTM">
    <text evidence="1">Carboxylation is probably crucial for Mg(2+) binding and, consequently, for the gamma-phosphate positioning of ATP.</text>
</comment>
<comment type="similarity">
    <text evidence="1">Belongs to the MurCDEF family. MurE subfamily.</text>
</comment>
<name>MURE_BORAP</name>
<organism>
    <name type="scientific">Borreliella afzelii (strain PKo)</name>
    <name type="common">Borrelia afzelii</name>
    <dbReference type="NCBI Taxonomy" id="390236"/>
    <lineage>
        <taxon>Bacteria</taxon>
        <taxon>Pseudomonadati</taxon>
        <taxon>Spirochaetota</taxon>
        <taxon>Spirochaetia</taxon>
        <taxon>Spirochaetales</taxon>
        <taxon>Borreliaceae</taxon>
        <taxon>Borreliella</taxon>
    </lineage>
</organism>
<keyword id="KW-0067">ATP-binding</keyword>
<keyword id="KW-0131">Cell cycle</keyword>
<keyword id="KW-0132">Cell division</keyword>
<keyword id="KW-0133">Cell shape</keyword>
<keyword id="KW-0961">Cell wall biogenesis/degradation</keyword>
<keyword id="KW-0963">Cytoplasm</keyword>
<keyword id="KW-0436">Ligase</keyword>
<keyword id="KW-0547">Nucleotide-binding</keyword>
<keyword id="KW-0573">Peptidoglycan synthesis</keyword>